<feature type="transit peptide" description="Chloroplast" evidence="3 4">
    <location>
        <begin position="1"/>
        <end position="62"/>
    </location>
</feature>
<feature type="chain" id="PRO_0000042177" description="Small ribosomal subunit protein cS22">
    <location>
        <begin position="63"/>
        <end position="260"/>
    </location>
</feature>
<feature type="domain" description="RRM 1" evidence="1">
    <location>
        <begin position="84"/>
        <end position="162"/>
    </location>
</feature>
<feature type="domain" description="RRM 2" evidence="1">
    <location>
        <begin position="184"/>
        <end position="260"/>
    </location>
</feature>
<feature type="region of interest" description="Disordered" evidence="2">
    <location>
        <begin position="63"/>
        <end position="83"/>
    </location>
</feature>
<feature type="compositionally biased region" description="Low complexity" evidence="2">
    <location>
        <begin position="63"/>
        <end position="78"/>
    </location>
</feature>
<sequence>MATISSILPCHGLLQHCSSSSSSSKPKFSSQNLVQLQSFSNGFGLKLKTRVSTNPPLLKVRAVVTEETSSSSTASSSSDGEGARRLYVGNIPRNLNNDELRTIVEEHGAIEIAEVMYDKYSGRSRRFGFVTMKTVEDANAVIEKLNDTEIGGRKIKVNITEKPLEGMDIATTQAEDSQFVESPYKVYIGNLAKTVTNELLKDFFSEKGKVLGAKVQRTPGTSKSNGFGFVSFSSEEEVEAAIQALNNSVLEGQKIRVNKA</sequence>
<protein>
    <recommendedName>
        <fullName evidence="7">Small ribosomal subunit protein cS22</fullName>
    </recommendedName>
    <alternativeName>
        <fullName evidence="6">30S ribosomal protein 2, chloroplastic</fullName>
    </alternativeName>
    <alternativeName>
        <fullName>Plastid-specific 30S ribosomal protein 2</fullName>
        <shortName>PSRP-2</shortName>
    </alternativeName>
</protein>
<dbReference type="EMBL" id="AF240462">
    <property type="protein sequence ID" value="AAF64167.1"/>
    <property type="molecule type" value="mRNA"/>
</dbReference>
<dbReference type="EMBL" id="KQ152842">
    <property type="protein sequence ID" value="KNA13500.1"/>
    <property type="molecule type" value="Genomic_DNA"/>
</dbReference>
<dbReference type="PDB" id="5MMJ">
    <property type="method" value="EM"/>
    <property type="resolution" value="3.65 A"/>
    <property type="chains" value="v=1-260"/>
</dbReference>
<dbReference type="PDB" id="5MMM">
    <property type="method" value="EM"/>
    <property type="resolution" value="3.40 A"/>
    <property type="chains" value="v=1-260"/>
</dbReference>
<dbReference type="PDB" id="5X8P">
    <property type="method" value="EM"/>
    <property type="resolution" value="3.40 A"/>
    <property type="chains" value="v=63-260"/>
</dbReference>
<dbReference type="PDB" id="5X8R">
    <property type="method" value="EM"/>
    <property type="resolution" value="3.70 A"/>
    <property type="chains" value="v=63-260"/>
</dbReference>
<dbReference type="PDBsum" id="5MMJ"/>
<dbReference type="PDBsum" id="5MMM"/>
<dbReference type="PDBsum" id="5X8P"/>
<dbReference type="PDBsum" id="5X8R"/>
<dbReference type="EMDB" id="EMD-3532"/>
<dbReference type="EMDB" id="EMD-3533"/>
<dbReference type="EMDB" id="EMD-6709"/>
<dbReference type="EMDB" id="EMD-6710"/>
<dbReference type="SMR" id="P82277"/>
<dbReference type="STRING" id="3562.P82277"/>
<dbReference type="OrthoDB" id="439808at2759"/>
<dbReference type="Proteomes" id="UP001155700">
    <property type="component" value="Unplaced"/>
</dbReference>
<dbReference type="GO" id="GO:0009535">
    <property type="term" value="C:chloroplast thylakoid membrane"/>
    <property type="evidence" value="ECO:0007669"/>
    <property type="project" value="TreeGrafter"/>
</dbReference>
<dbReference type="GO" id="GO:1990904">
    <property type="term" value="C:ribonucleoprotein complex"/>
    <property type="evidence" value="ECO:0007669"/>
    <property type="project" value="UniProtKB-KW"/>
</dbReference>
<dbReference type="GO" id="GO:0005840">
    <property type="term" value="C:ribosome"/>
    <property type="evidence" value="ECO:0007669"/>
    <property type="project" value="UniProtKB-KW"/>
</dbReference>
<dbReference type="GO" id="GO:0003729">
    <property type="term" value="F:mRNA binding"/>
    <property type="evidence" value="ECO:0007669"/>
    <property type="project" value="TreeGrafter"/>
</dbReference>
<dbReference type="GO" id="GO:0019843">
    <property type="term" value="F:rRNA binding"/>
    <property type="evidence" value="ECO:0007669"/>
    <property type="project" value="UniProtKB-KW"/>
</dbReference>
<dbReference type="GO" id="GO:1901259">
    <property type="term" value="P:chloroplast rRNA processing"/>
    <property type="evidence" value="ECO:0007669"/>
    <property type="project" value="TreeGrafter"/>
</dbReference>
<dbReference type="CDD" id="cd21609">
    <property type="entry name" value="RRM1_PSRP2_like"/>
    <property type="match status" value="1"/>
</dbReference>
<dbReference type="CDD" id="cd21610">
    <property type="entry name" value="RRM2_PSRP2"/>
    <property type="match status" value="1"/>
</dbReference>
<dbReference type="FunFam" id="3.30.70.330:FF:000401">
    <property type="entry name" value="30S ribosomal protein 2, chloroplastic"/>
    <property type="match status" value="1"/>
</dbReference>
<dbReference type="Gene3D" id="3.30.70.330">
    <property type="match status" value="2"/>
</dbReference>
<dbReference type="InterPro" id="IPR050502">
    <property type="entry name" value="Euk_RNA-bind_prot"/>
</dbReference>
<dbReference type="InterPro" id="IPR012677">
    <property type="entry name" value="Nucleotide-bd_a/b_plait_sf"/>
</dbReference>
<dbReference type="InterPro" id="IPR035979">
    <property type="entry name" value="RBD_domain_sf"/>
</dbReference>
<dbReference type="InterPro" id="IPR000504">
    <property type="entry name" value="RRM_dom"/>
</dbReference>
<dbReference type="PANTHER" id="PTHR48025">
    <property type="entry name" value="OS02G0815200 PROTEIN"/>
    <property type="match status" value="1"/>
</dbReference>
<dbReference type="PANTHER" id="PTHR48025:SF4">
    <property type="entry name" value="SMALL RIBOSOMAL SUBUNIT PROTEIN CS22"/>
    <property type="match status" value="1"/>
</dbReference>
<dbReference type="Pfam" id="PF00076">
    <property type="entry name" value="RRM_1"/>
    <property type="match status" value="2"/>
</dbReference>
<dbReference type="SMART" id="SM00360">
    <property type="entry name" value="RRM"/>
    <property type="match status" value="2"/>
</dbReference>
<dbReference type="SUPFAM" id="SSF54928">
    <property type="entry name" value="RNA-binding domain, RBD"/>
    <property type="match status" value="2"/>
</dbReference>
<dbReference type="PROSITE" id="PS50102">
    <property type="entry name" value="RRM"/>
    <property type="match status" value="2"/>
</dbReference>
<accession>P82277</accession>
<accession>A0A0K9R1W7</accession>
<organism>
    <name type="scientific">Spinacia oleracea</name>
    <name type="common">Spinach</name>
    <dbReference type="NCBI Taxonomy" id="3562"/>
    <lineage>
        <taxon>Eukaryota</taxon>
        <taxon>Viridiplantae</taxon>
        <taxon>Streptophyta</taxon>
        <taxon>Embryophyta</taxon>
        <taxon>Tracheophyta</taxon>
        <taxon>Spermatophyta</taxon>
        <taxon>Magnoliopsida</taxon>
        <taxon>eudicotyledons</taxon>
        <taxon>Gunneridae</taxon>
        <taxon>Pentapetalae</taxon>
        <taxon>Caryophyllales</taxon>
        <taxon>Chenopodiaceae</taxon>
        <taxon>Chenopodioideae</taxon>
        <taxon>Anserineae</taxon>
        <taxon>Spinacia</taxon>
    </lineage>
</organism>
<keyword id="KW-0002">3D-structure</keyword>
<keyword id="KW-0150">Chloroplast</keyword>
<keyword id="KW-0903">Direct protein sequencing</keyword>
<keyword id="KW-0934">Plastid</keyword>
<keyword id="KW-1185">Reference proteome</keyword>
<keyword id="KW-0677">Repeat</keyword>
<keyword id="KW-0687">Ribonucleoprotein</keyword>
<keyword id="KW-0689">Ribosomal protein</keyword>
<keyword id="KW-0694">RNA-binding</keyword>
<keyword id="KW-0699">rRNA-binding</keyword>
<keyword id="KW-0809">Transit peptide</keyword>
<reference key="1">
    <citation type="journal article" date="2000" name="J. Biol. Chem.">
        <title>The plastid ribosomal proteins. Identification of all the proteins in the 30S subunit of an organelle ribosome (chloroplast).</title>
        <authorList>
            <person name="Yamaguchi K."/>
            <person name="von Knoblauch K."/>
            <person name="Subramanian A.R."/>
        </authorList>
    </citation>
    <scope>NUCLEOTIDE SEQUENCE [MRNA]</scope>
    <scope>PROTEIN SEQUENCE OF 63-83</scope>
    <scope>SUBUNIT</scope>
    <scope>SUBCELLULAR LOCATION</scope>
    <scope>MASS SPECTROMETRY</scope>
    <source>
        <strain>cv. Alwaro</strain>
        <tissue>Leaf</tissue>
    </source>
</reference>
<reference key="2">
    <citation type="journal article" date="2003" name="Eur. J. Biochem.">
        <title>Proteomic identification of all plastid-specific ribosomal proteins in higher plant chloroplast 30S ribosomal subunit.</title>
        <authorList>
            <person name="Yamaguchi K."/>
            <person name="Subramanian A.R."/>
        </authorList>
    </citation>
    <scope>NUCLEOTIDE SEQUENCE [MRNA]</scope>
    <scope>PROTEIN SEQUENCE OF 63-83; 117-132; 157-187 AND 202-220</scope>
    <scope>SUBUNIT</scope>
    <scope>SUBCELLULAR LOCATION</scope>
    <scope>MASS SPECTROMETRY</scope>
    <source>
        <strain>cv. Alwaro</strain>
    </source>
</reference>
<reference key="3">
    <citation type="journal article" date="2014" name="Nature">
        <title>The genome of the recently domesticated crop plant sugar beet (Beta vulgaris).</title>
        <authorList>
            <person name="Dohm J.C."/>
            <person name="Minoche A.E."/>
            <person name="Holtgraewe D."/>
            <person name="Capella-Gutierrez S."/>
            <person name="Zakrzewski F."/>
            <person name="Tafer H."/>
            <person name="Rupp O."/>
            <person name="Soerensen T.R."/>
            <person name="Stracke R."/>
            <person name="Reinhardt R."/>
            <person name="Goesmann A."/>
            <person name="Kraft T."/>
            <person name="Schulz B."/>
            <person name="Stadler P.F."/>
            <person name="Schmidt T."/>
            <person name="Gabaldon T."/>
            <person name="Lehrach H."/>
            <person name="Weisshaar B."/>
            <person name="Himmelbauer H."/>
        </authorList>
    </citation>
    <scope>NUCLEOTIDE SEQUENCE [LARGE SCALE GENOMIC DNA]</scope>
    <source>
        <strain>cv. Viroflay</strain>
        <tissue>Leaf</tissue>
    </source>
</reference>
<reference key="4">
    <citation type="journal article" date="2007" name="Proc. Natl. Acad. Sci. U.S.A.">
        <title>Cryo-EM study of the spinach chloroplast ribosome reveals the structural and functional roles of plastid-specific ribosomal proteins.</title>
        <authorList>
            <person name="Sharma M.R."/>
            <person name="Wilson D.N."/>
            <person name="Datta P.P."/>
            <person name="Barat C."/>
            <person name="Schluenzen F."/>
            <person name="Fucini P."/>
            <person name="Agrawal R.K."/>
        </authorList>
    </citation>
    <scope>MODELING ON THE 70S RIBOSOME</scope>
    <scope>POSSIBLE RNA-BINDING</scope>
</reference>
<reference key="5">
    <citation type="journal article" date="2017" name="EMBO J.">
        <title>The complete structure of the chloroplast 70S ribosome in complex with translation factor pY.</title>
        <authorList>
            <person name="Bieri P."/>
            <person name="Leibundgut M."/>
            <person name="Saurer M."/>
            <person name="Boehringer D."/>
            <person name="Ban N."/>
        </authorList>
    </citation>
    <scope>STRUCTURE BY ELECTRON MICROSCOPY (3.40 ANGSTROMS)</scope>
    <scope>SUBUNIT</scope>
    <scope>SUBCELLULAR LOCATION</scope>
</reference>
<comment type="function">
    <text evidence="9 10 11">Component of the chloroplast ribosome (chloro-ribosome), a dedicated translation machinery responsible for the synthesis of chloroplast genome-encoded proteins, including proteins of the transcription and translation machinery and components of the photosynthetic apparatus (PubMed:10874039, PubMed:28007896). cS22 may have a role in the recruitment of stored chloroplast mRNAs for active protein synthesis (PubMed:12605670).</text>
</comment>
<comment type="subunit">
    <text evidence="3 5">Component of the chloroplast small ribosomal subunit (SSU). Mature 70S chloroplast ribosomes of higher plants consist of a small (30S) and a large (50S) subunit. The 30S small subunit contains 1 molecule of ribosomal RNA (16S rRNA) and 24 different proteins. The 50S large subunit contains 3 rRNA molecules (23S, 5S and 4.5S rRNA) and 33 different proteins.</text>
</comment>
<comment type="subcellular location">
    <subcellularLocation>
        <location evidence="3 4 5">Plastid</location>
        <location evidence="3 4 5">Chloroplast</location>
    </subcellularLocation>
</comment>
<comment type="mass spectrometry"/>
<comment type="mass spectrometry"/>
<comment type="mass spectrometry"/>
<comment type="similarity">
    <text evidence="8">Belongs to the chloroplast-specific ribosomal protein cS22 family.</text>
</comment>
<proteinExistence type="evidence at protein level"/>
<gene>
    <name type="primary">PSRP2</name>
    <name type="ORF">SOVF_116380</name>
</gene>
<evidence type="ECO:0000255" key="1">
    <source>
        <dbReference type="PROSITE-ProRule" id="PRU00176"/>
    </source>
</evidence>
<evidence type="ECO:0000256" key="2">
    <source>
        <dbReference type="SAM" id="MobiDB-lite"/>
    </source>
</evidence>
<evidence type="ECO:0000269" key="3">
    <source>
    </source>
</evidence>
<evidence type="ECO:0000269" key="4">
    <source>
    </source>
</evidence>
<evidence type="ECO:0000269" key="5">
    <source>
    </source>
</evidence>
<evidence type="ECO:0000303" key="6">
    <source>
    </source>
</evidence>
<evidence type="ECO:0000303" key="7">
    <source>
    </source>
</evidence>
<evidence type="ECO:0000305" key="8"/>
<evidence type="ECO:0000305" key="9">
    <source>
    </source>
</evidence>
<evidence type="ECO:0000305" key="10">
    <source>
    </source>
</evidence>
<evidence type="ECO:0000305" key="11">
    <source>
    </source>
</evidence>
<name>RRP2_SPIOL</name>